<accession>Q5E1N3</accession>
<reference key="1">
    <citation type="journal article" date="2005" name="Proc. Natl. Acad. Sci. U.S.A.">
        <title>Complete genome sequence of Vibrio fischeri: a symbiotic bacterium with pathogenic congeners.</title>
        <authorList>
            <person name="Ruby E.G."/>
            <person name="Urbanowski M."/>
            <person name="Campbell J."/>
            <person name="Dunn A."/>
            <person name="Faini M."/>
            <person name="Gunsalus R."/>
            <person name="Lostroh P."/>
            <person name="Lupp C."/>
            <person name="McCann J."/>
            <person name="Millikan D."/>
            <person name="Schaefer A."/>
            <person name="Stabb E."/>
            <person name="Stevens A."/>
            <person name="Visick K."/>
            <person name="Whistler C."/>
            <person name="Greenberg E.P."/>
        </authorList>
    </citation>
    <scope>NUCLEOTIDE SEQUENCE [LARGE SCALE GENOMIC DNA]</scope>
    <source>
        <strain>ATCC 700601 / ES114</strain>
    </source>
</reference>
<comment type="function">
    <text evidence="1">F(1)F(0) ATP synthase produces ATP from ADP in the presence of a proton or sodium gradient. F-type ATPases consist of two structural domains, F(1) containing the extramembraneous catalytic core and F(0) containing the membrane proton channel, linked together by a central stalk and a peripheral stalk. During catalysis, ATP synthesis in the catalytic domain of F(1) is coupled via a rotary mechanism of the central stalk subunits to proton translocation.</text>
</comment>
<comment type="function">
    <text evidence="1">Component of the F(0) channel, it forms part of the peripheral stalk, linking F(1) to F(0).</text>
</comment>
<comment type="subunit">
    <text evidence="1">F-type ATPases have 2 components, F(1) - the catalytic core - and F(0) - the membrane proton channel. F(1) has five subunits: alpha(3), beta(3), gamma(1), delta(1), epsilon(1). F(0) has three main subunits: a(1), b(2) and c(10-14). The alpha and beta chains form an alternating ring which encloses part of the gamma chain. F(1) is attached to F(0) by a central stalk formed by the gamma and epsilon chains, while a peripheral stalk is formed by the delta and b chains.</text>
</comment>
<comment type="subcellular location">
    <subcellularLocation>
        <location evidence="1">Cell inner membrane</location>
        <topology evidence="1">Single-pass membrane protein</topology>
    </subcellularLocation>
</comment>
<comment type="similarity">
    <text evidence="1">Belongs to the ATPase B chain family.</text>
</comment>
<proteinExistence type="inferred from homology"/>
<protein>
    <recommendedName>
        <fullName evidence="1">ATP synthase subunit b</fullName>
    </recommendedName>
    <alternativeName>
        <fullName evidence="1">ATP synthase F(0) sector subunit b</fullName>
    </alternativeName>
    <alternativeName>
        <fullName evidence="1">ATPase subunit I</fullName>
    </alternativeName>
    <alternativeName>
        <fullName evidence="1">F-type ATPase subunit b</fullName>
        <shortName evidence="1">F-ATPase subunit b</shortName>
    </alternativeName>
</protein>
<evidence type="ECO:0000255" key="1">
    <source>
        <dbReference type="HAMAP-Rule" id="MF_01398"/>
    </source>
</evidence>
<organism>
    <name type="scientific">Aliivibrio fischeri (strain ATCC 700601 / ES114)</name>
    <name type="common">Vibrio fischeri</name>
    <dbReference type="NCBI Taxonomy" id="312309"/>
    <lineage>
        <taxon>Bacteria</taxon>
        <taxon>Pseudomonadati</taxon>
        <taxon>Pseudomonadota</taxon>
        <taxon>Gammaproteobacteria</taxon>
        <taxon>Vibrionales</taxon>
        <taxon>Vibrionaceae</taxon>
        <taxon>Aliivibrio</taxon>
    </lineage>
</organism>
<gene>
    <name evidence="1" type="primary">atpF</name>
    <name type="ordered locus">VF_2568</name>
</gene>
<keyword id="KW-0066">ATP synthesis</keyword>
<keyword id="KW-0997">Cell inner membrane</keyword>
<keyword id="KW-1003">Cell membrane</keyword>
<keyword id="KW-0138">CF(0)</keyword>
<keyword id="KW-0375">Hydrogen ion transport</keyword>
<keyword id="KW-0406">Ion transport</keyword>
<keyword id="KW-0472">Membrane</keyword>
<keyword id="KW-1185">Reference proteome</keyword>
<keyword id="KW-0812">Transmembrane</keyword>
<keyword id="KW-1133">Transmembrane helix</keyword>
<keyword id="KW-0813">Transport</keyword>
<name>ATPF_ALIF1</name>
<dbReference type="EMBL" id="CP000020">
    <property type="protein sequence ID" value="AAW87063.1"/>
    <property type="molecule type" value="Genomic_DNA"/>
</dbReference>
<dbReference type="RefSeq" id="YP_205951.1">
    <property type="nucleotide sequence ID" value="NC_006840.2"/>
</dbReference>
<dbReference type="SMR" id="Q5E1N3"/>
<dbReference type="STRING" id="312309.VF_2568"/>
<dbReference type="EnsemblBacteria" id="AAW87063">
    <property type="protein sequence ID" value="AAW87063"/>
    <property type="gene ID" value="VF_2568"/>
</dbReference>
<dbReference type="KEGG" id="vfi:VF_2568"/>
<dbReference type="PATRIC" id="fig|312309.11.peg.2595"/>
<dbReference type="eggNOG" id="COG0711">
    <property type="taxonomic scope" value="Bacteria"/>
</dbReference>
<dbReference type="HOGENOM" id="CLU_079215_4_5_6"/>
<dbReference type="OrthoDB" id="9788020at2"/>
<dbReference type="Proteomes" id="UP000000537">
    <property type="component" value="Chromosome I"/>
</dbReference>
<dbReference type="GO" id="GO:0005886">
    <property type="term" value="C:plasma membrane"/>
    <property type="evidence" value="ECO:0007669"/>
    <property type="project" value="UniProtKB-SubCell"/>
</dbReference>
<dbReference type="GO" id="GO:0045259">
    <property type="term" value="C:proton-transporting ATP synthase complex"/>
    <property type="evidence" value="ECO:0007669"/>
    <property type="project" value="UniProtKB-KW"/>
</dbReference>
<dbReference type="GO" id="GO:0046933">
    <property type="term" value="F:proton-transporting ATP synthase activity, rotational mechanism"/>
    <property type="evidence" value="ECO:0007669"/>
    <property type="project" value="UniProtKB-UniRule"/>
</dbReference>
<dbReference type="GO" id="GO:0046961">
    <property type="term" value="F:proton-transporting ATPase activity, rotational mechanism"/>
    <property type="evidence" value="ECO:0007669"/>
    <property type="project" value="TreeGrafter"/>
</dbReference>
<dbReference type="CDD" id="cd06503">
    <property type="entry name" value="ATP-synt_Fo_b"/>
    <property type="match status" value="1"/>
</dbReference>
<dbReference type="Gene3D" id="6.10.250.1580">
    <property type="match status" value="1"/>
</dbReference>
<dbReference type="HAMAP" id="MF_01398">
    <property type="entry name" value="ATP_synth_b_bprime"/>
    <property type="match status" value="1"/>
</dbReference>
<dbReference type="InterPro" id="IPR028987">
    <property type="entry name" value="ATP_synth_B-like_membr_sf"/>
</dbReference>
<dbReference type="InterPro" id="IPR002146">
    <property type="entry name" value="ATP_synth_b/b'su_bac/chlpt"/>
</dbReference>
<dbReference type="InterPro" id="IPR005864">
    <property type="entry name" value="ATP_synth_F0_bsu_bac"/>
</dbReference>
<dbReference type="InterPro" id="IPR050059">
    <property type="entry name" value="ATP_synthase_B_chain"/>
</dbReference>
<dbReference type="NCBIfam" id="TIGR01144">
    <property type="entry name" value="ATP_synt_b"/>
    <property type="match status" value="1"/>
</dbReference>
<dbReference type="NCBIfam" id="NF004411">
    <property type="entry name" value="PRK05759.1-2"/>
    <property type="match status" value="1"/>
</dbReference>
<dbReference type="NCBIfam" id="NF004413">
    <property type="entry name" value="PRK05759.1-4"/>
    <property type="match status" value="1"/>
</dbReference>
<dbReference type="PANTHER" id="PTHR33445:SF1">
    <property type="entry name" value="ATP SYNTHASE SUBUNIT B"/>
    <property type="match status" value="1"/>
</dbReference>
<dbReference type="PANTHER" id="PTHR33445">
    <property type="entry name" value="ATP SYNTHASE SUBUNIT B', CHLOROPLASTIC"/>
    <property type="match status" value="1"/>
</dbReference>
<dbReference type="Pfam" id="PF00430">
    <property type="entry name" value="ATP-synt_B"/>
    <property type="match status" value="1"/>
</dbReference>
<dbReference type="SUPFAM" id="SSF81573">
    <property type="entry name" value="F1F0 ATP synthase subunit B, membrane domain"/>
    <property type="match status" value="1"/>
</dbReference>
<feature type="chain" id="PRO_0000368857" description="ATP synthase subunit b">
    <location>
        <begin position="1"/>
        <end position="154"/>
    </location>
</feature>
<feature type="transmembrane region" description="Helical" evidence="1">
    <location>
        <begin position="5"/>
        <end position="27"/>
    </location>
</feature>
<sequence length="154" mass="17335">MNATLLGQAIAFTLFVWFCMKYVWPPIMEAIEERQKKIADGLSAAERAAKDLDLAQANASDQLKEAKRAATEIIEQANKRKSQILDEAREEALVERQKILTQGEAELESERNRARDELRKQVATLAVIGAEKILERSIDVEAQKDILDNITAKL</sequence>